<reference evidence="5" key="1">
    <citation type="journal article" date="2003" name="PLoS Biol.">
        <title>The genome sequence of Caenorhabditis briggsae: a platform for comparative genomics.</title>
        <authorList>
            <person name="Stein L.D."/>
            <person name="Bao Z."/>
            <person name="Blasiar D."/>
            <person name="Blumenthal T."/>
            <person name="Brent M.R."/>
            <person name="Chen N."/>
            <person name="Chinwalla A."/>
            <person name="Clarke L."/>
            <person name="Clee C."/>
            <person name="Coghlan A."/>
            <person name="Coulson A."/>
            <person name="D'Eustachio P."/>
            <person name="Fitch D.H.A."/>
            <person name="Fulton L.A."/>
            <person name="Fulton R.E."/>
            <person name="Griffiths-Jones S."/>
            <person name="Harris T.W."/>
            <person name="Hillier L.W."/>
            <person name="Kamath R."/>
            <person name="Kuwabara P.E."/>
            <person name="Mardis E.R."/>
            <person name="Marra M.A."/>
            <person name="Miner T.L."/>
            <person name="Minx P."/>
            <person name="Mullikin J.C."/>
            <person name="Plumb R.W."/>
            <person name="Rogers J."/>
            <person name="Schein J.E."/>
            <person name="Sohrmann M."/>
            <person name="Spieth J."/>
            <person name="Stajich J.E."/>
            <person name="Wei C."/>
            <person name="Willey D."/>
            <person name="Wilson R.K."/>
            <person name="Durbin R.M."/>
            <person name="Waterston R.H."/>
        </authorList>
    </citation>
    <scope>NUCLEOTIDE SEQUENCE [LARGE SCALE GENOMIC DNA]</scope>
    <source>
        <strain evidence="5">AF16</strain>
    </source>
</reference>
<name>BCA1_CAEBR</name>
<gene>
    <name evidence="5" type="primary">bca-1</name>
    <name type="ORF">CBG14861</name>
</gene>
<proteinExistence type="inferred from homology"/>
<organism>
    <name type="scientific">Caenorhabditis briggsae</name>
    <dbReference type="NCBI Taxonomy" id="6238"/>
    <lineage>
        <taxon>Eukaryota</taxon>
        <taxon>Metazoa</taxon>
        <taxon>Ecdysozoa</taxon>
        <taxon>Nematoda</taxon>
        <taxon>Chromadorea</taxon>
        <taxon>Rhabditida</taxon>
        <taxon>Rhabditina</taxon>
        <taxon>Rhabditomorpha</taxon>
        <taxon>Rhabditoidea</taxon>
        <taxon>Rhabditidae</taxon>
        <taxon>Peloderinae</taxon>
        <taxon>Caenorhabditis</taxon>
    </lineage>
</organism>
<dbReference type="EC" id="4.2.1.1"/>
<dbReference type="EMBL" id="HE600983">
    <property type="protein sequence ID" value="CAP33274.2"/>
    <property type="molecule type" value="Genomic_DNA"/>
</dbReference>
<dbReference type="SMR" id="A8XKV0"/>
<dbReference type="FunCoup" id="A8XKV0">
    <property type="interactions" value="377"/>
</dbReference>
<dbReference type="STRING" id="6238.A8XKV0"/>
<dbReference type="EnsemblMetazoa" id="CBG14861.1">
    <property type="protein sequence ID" value="CBG14861.1"/>
    <property type="gene ID" value="WBGene00035244"/>
</dbReference>
<dbReference type="WormBase" id="CBG14861">
    <property type="protein sequence ID" value="CBP35478"/>
    <property type="gene ID" value="WBGene00035244"/>
    <property type="gene designation" value="Cbr-bca-1"/>
</dbReference>
<dbReference type="eggNOG" id="KOG1578">
    <property type="taxonomic scope" value="Eukaryota"/>
</dbReference>
<dbReference type="HOGENOM" id="CLU_053879_5_3_1"/>
<dbReference type="InParanoid" id="A8XKV0"/>
<dbReference type="OMA" id="PEDQDGP"/>
<dbReference type="OrthoDB" id="10020193at2759"/>
<dbReference type="Proteomes" id="UP000008549">
    <property type="component" value="Unassembled WGS sequence"/>
</dbReference>
<dbReference type="GO" id="GO:0004089">
    <property type="term" value="F:carbonate dehydratase activity"/>
    <property type="evidence" value="ECO:0007669"/>
    <property type="project" value="UniProtKB-EC"/>
</dbReference>
<dbReference type="GO" id="GO:0008270">
    <property type="term" value="F:zinc ion binding"/>
    <property type="evidence" value="ECO:0007669"/>
    <property type="project" value="InterPro"/>
</dbReference>
<dbReference type="FunFam" id="3.40.1050.10:FF:000007">
    <property type="entry name" value="Carbonic anhydrase"/>
    <property type="match status" value="1"/>
</dbReference>
<dbReference type="Gene3D" id="3.40.1050.10">
    <property type="entry name" value="Carbonic anhydrase"/>
    <property type="match status" value="1"/>
</dbReference>
<dbReference type="InterPro" id="IPR001765">
    <property type="entry name" value="Carbonic_anhydrase"/>
</dbReference>
<dbReference type="InterPro" id="IPR036874">
    <property type="entry name" value="Carbonic_anhydrase_sf"/>
</dbReference>
<dbReference type="PANTHER" id="PTHR11002">
    <property type="entry name" value="CARBONIC ANHYDRASE"/>
    <property type="match status" value="1"/>
</dbReference>
<dbReference type="PANTHER" id="PTHR11002:SF76">
    <property type="entry name" value="CARBONIC ANHYDRASE"/>
    <property type="match status" value="1"/>
</dbReference>
<dbReference type="Pfam" id="PF00484">
    <property type="entry name" value="Pro_CA"/>
    <property type="match status" value="1"/>
</dbReference>
<dbReference type="SMART" id="SM00947">
    <property type="entry name" value="Pro_CA"/>
    <property type="match status" value="1"/>
</dbReference>
<dbReference type="SUPFAM" id="SSF53056">
    <property type="entry name" value="beta-carbonic anhydrase, cab"/>
    <property type="match status" value="1"/>
</dbReference>
<feature type="chain" id="PRO_0000374065" description="Beta carbonic anhydrase 1">
    <location>
        <begin position="1"/>
        <end position="270"/>
    </location>
</feature>
<feature type="binding site" evidence="2">
    <location>
        <position position="39"/>
    </location>
    <ligand>
        <name>Zn(2+)</name>
        <dbReference type="ChEBI" id="CHEBI:29105"/>
    </ligand>
</feature>
<feature type="binding site" evidence="2">
    <location>
        <position position="41"/>
    </location>
    <ligand>
        <name>Zn(2+)</name>
        <dbReference type="ChEBI" id="CHEBI:29105"/>
    </ligand>
</feature>
<feature type="binding site" evidence="2">
    <location>
        <position position="105"/>
    </location>
    <ligand>
        <name>Zn(2+)</name>
        <dbReference type="ChEBI" id="CHEBI:29105"/>
    </ligand>
</feature>
<feature type="binding site" evidence="2">
    <location>
        <position position="108"/>
    </location>
    <ligand>
        <name>Zn(2+)</name>
        <dbReference type="ChEBI" id="CHEBI:29105"/>
    </ligand>
</feature>
<accession>A8XKV0</accession>
<evidence type="ECO:0000250" key="1"/>
<evidence type="ECO:0000250" key="2">
    <source>
        <dbReference type="UniProtKB" id="P45148"/>
    </source>
</evidence>
<evidence type="ECO:0000255" key="3"/>
<evidence type="ECO:0000305" key="4"/>
<evidence type="ECO:0000312" key="5">
    <source>
        <dbReference type="EMBL" id="CAP33274.2"/>
    </source>
</evidence>
<keyword id="KW-0456">Lyase</keyword>
<keyword id="KW-0479">Metal-binding</keyword>
<keyword id="KW-1185">Reference proteome</keyword>
<keyword id="KW-0862">Zinc</keyword>
<sequence length="270" mass="30739">MNRIIRGVIQYNQKIKAGLVKQFEHVSDHPNPTAVMFTCMDSRMLPTRFTQSAVGDMFVVRNAGNMIPAAPNYGSYSEVSINTEPAALELAVKRGKIRHVVVCGHSDCKAMNTLYQLHQCPTKFDVSSPMDQWLRRNGFESMKKLNERLHIGPKTMKFESEVAPSQSFEAIIDPMEKWSAEDKLSQINVLQQIMNISTHEFLKDYLEAGNLHLHGAWFNIYDGEVFLFSKDRKRFVVIDEKTVPSLSAELERRCPLPEDKAGDVVIQNLH</sequence>
<protein>
    <recommendedName>
        <fullName>Beta carbonic anhydrase 1</fullName>
        <ecNumber>4.2.1.1</ecNumber>
    </recommendedName>
</protein>
<comment type="function">
    <text evidence="1">Reversible hydration of carbon dioxide.</text>
</comment>
<comment type="catalytic activity">
    <reaction evidence="4">
        <text>hydrogencarbonate + H(+) = CO2 + H2O</text>
        <dbReference type="Rhea" id="RHEA:10748"/>
        <dbReference type="ChEBI" id="CHEBI:15377"/>
        <dbReference type="ChEBI" id="CHEBI:15378"/>
        <dbReference type="ChEBI" id="CHEBI:16526"/>
        <dbReference type="ChEBI" id="CHEBI:17544"/>
        <dbReference type="EC" id="4.2.1.1"/>
    </reaction>
</comment>
<comment type="cofactor">
    <cofactor evidence="2">
        <name>Zn(2+)</name>
        <dbReference type="ChEBI" id="CHEBI:29105"/>
    </cofactor>
    <text evidence="2">Binds 1 zinc ion per subunit.</text>
</comment>
<comment type="similarity">
    <text evidence="3">Belongs to the beta-class carbonic anhydrase family.</text>
</comment>